<proteinExistence type="inferred from homology"/>
<gene>
    <name evidence="1" type="primary">metN</name>
    <name type="ordered locus">Reut_A2553</name>
</gene>
<comment type="function">
    <text evidence="1">Part of the ABC transporter complex MetNIQ involved in methionine import. Responsible for energy coupling to the transport system.</text>
</comment>
<comment type="catalytic activity">
    <reaction evidence="1">
        <text>L-methionine(out) + ATP + H2O = L-methionine(in) + ADP + phosphate + H(+)</text>
        <dbReference type="Rhea" id="RHEA:29779"/>
        <dbReference type="ChEBI" id="CHEBI:15377"/>
        <dbReference type="ChEBI" id="CHEBI:15378"/>
        <dbReference type="ChEBI" id="CHEBI:30616"/>
        <dbReference type="ChEBI" id="CHEBI:43474"/>
        <dbReference type="ChEBI" id="CHEBI:57844"/>
        <dbReference type="ChEBI" id="CHEBI:456216"/>
        <dbReference type="EC" id="7.4.2.11"/>
    </reaction>
</comment>
<comment type="catalytic activity">
    <reaction evidence="1">
        <text>D-methionine(out) + ATP + H2O = D-methionine(in) + ADP + phosphate + H(+)</text>
        <dbReference type="Rhea" id="RHEA:29767"/>
        <dbReference type="ChEBI" id="CHEBI:15377"/>
        <dbReference type="ChEBI" id="CHEBI:15378"/>
        <dbReference type="ChEBI" id="CHEBI:30616"/>
        <dbReference type="ChEBI" id="CHEBI:43474"/>
        <dbReference type="ChEBI" id="CHEBI:57932"/>
        <dbReference type="ChEBI" id="CHEBI:456216"/>
        <dbReference type="EC" id="7.4.2.11"/>
    </reaction>
</comment>
<comment type="subunit">
    <text evidence="1">The complex is composed of two ATP-binding proteins (MetN), two transmembrane proteins (MetI) and a solute-binding protein (MetQ).</text>
</comment>
<comment type="subcellular location">
    <subcellularLocation>
        <location evidence="1">Cell inner membrane</location>
        <topology evidence="1">Peripheral membrane protein</topology>
    </subcellularLocation>
</comment>
<comment type="similarity">
    <text evidence="1">Belongs to the ABC transporter superfamily. Methionine importer (TC 3.A.1.24) family.</text>
</comment>
<reference key="1">
    <citation type="journal article" date="2010" name="PLoS ONE">
        <title>The complete multipartite genome sequence of Cupriavidus necator JMP134, a versatile pollutant degrader.</title>
        <authorList>
            <person name="Lykidis A."/>
            <person name="Perez-Pantoja D."/>
            <person name="Ledger T."/>
            <person name="Mavromatis K."/>
            <person name="Anderson I.J."/>
            <person name="Ivanova N.N."/>
            <person name="Hooper S.D."/>
            <person name="Lapidus A."/>
            <person name="Lucas S."/>
            <person name="Gonzalez B."/>
            <person name="Kyrpides N.C."/>
        </authorList>
    </citation>
    <scope>NUCLEOTIDE SEQUENCE [LARGE SCALE GENOMIC DNA]</scope>
    <source>
        <strain>JMP134 / LMG 1197</strain>
    </source>
</reference>
<protein>
    <recommendedName>
        <fullName evidence="1">Methionine import ATP-binding protein MetN</fullName>
        <ecNumber evidence="1">7.4.2.11</ecNumber>
    </recommendedName>
</protein>
<sequence length="344" mass="37325">MIELQGLSQRFPGGSGEVHALRDVSLSIGAGEVFGIIGRSGAGKSTLVRAINLLNRPTSGRVIVGGQDLTALDNGALRLARRDIGMIFQHFNLLSSRTVFDNVALPLELAGKTKSEIEATVLPLLDLVGLSVLKDRYPSQISGGQKQRVGIARALASKPKVLLSDEATSALDPETTRSILDLLKQINRELGLTIVMITHQMEVIKQVCDRVAVLEAGRVVEEGRVIDVFLRPQHEVTRAMIGDVIAQELPESVLKRVESRLGNGRDHVYRLAFTGEGVDQPVLAQAIRRYGLDFNILHGHIDEIQGQAFGSLAIMATGELADVKAAMEYLQQQGVVVEEIEHVV</sequence>
<evidence type="ECO:0000255" key="1">
    <source>
        <dbReference type="HAMAP-Rule" id="MF_01719"/>
    </source>
</evidence>
<organism>
    <name type="scientific">Cupriavidus pinatubonensis (strain JMP 134 / LMG 1197)</name>
    <name type="common">Cupriavidus necator (strain JMP 134)</name>
    <dbReference type="NCBI Taxonomy" id="264198"/>
    <lineage>
        <taxon>Bacteria</taxon>
        <taxon>Pseudomonadati</taxon>
        <taxon>Pseudomonadota</taxon>
        <taxon>Betaproteobacteria</taxon>
        <taxon>Burkholderiales</taxon>
        <taxon>Burkholderiaceae</taxon>
        <taxon>Cupriavidus</taxon>
    </lineage>
</organism>
<dbReference type="EC" id="7.4.2.11" evidence="1"/>
<dbReference type="EMBL" id="CP000090">
    <property type="protein sequence ID" value="AAZ61914.1"/>
    <property type="molecule type" value="Genomic_DNA"/>
</dbReference>
<dbReference type="SMR" id="Q46Y69"/>
<dbReference type="STRING" id="264198.Reut_A2553"/>
<dbReference type="KEGG" id="reu:Reut_A2553"/>
<dbReference type="eggNOG" id="COG1135">
    <property type="taxonomic scope" value="Bacteria"/>
</dbReference>
<dbReference type="HOGENOM" id="CLU_000604_1_3_4"/>
<dbReference type="OrthoDB" id="9802264at2"/>
<dbReference type="GO" id="GO:0005886">
    <property type="term" value="C:plasma membrane"/>
    <property type="evidence" value="ECO:0007669"/>
    <property type="project" value="UniProtKB-SubCell"/>
</dbReference>
<dbReference type="GO" id="GO:0033232">
    <property type="term" value="F:ABC-type D-methionine transporter activity"/>
    <property type="evidence" value="ECO:0007669"/>
    <property type="project" value="UniProtKB-EC"/>
</dbReference>
<dbReference type="GO" id="GO:0005524">
    <property type="term" value="F:ATP binding"/>
    <property type="evidence" value="ECO:0007669"/>
    <property type="project" value="UniProtKB-KW"/>
</dbReference>
<dbReference type="GO" id="GO:0016887">
    <property type="term" value="F:ATP hydrolysis activity"/>
    <property type="evidence" value="ECO:0007669"/>
    <property type="project" value="InterPro"/>
</dbReference>
<dbReference type="CDD" id="cd03258">
    <property type="entry name" value="ABC_MetN_methionine_transporter"/>
    <property type="match status" value="1"/>
</dbReference>
<dbReference type="FunFam" id="3.40.50.300:FF:000056">
    <property type="entry name" value="Cell division ATP-binding protein FtsE"/>
    <property type="match status" value="1"/>
</dbReference>
<dbReference type="Gene3D" id="3.30.70.260">
    <property type="match status" value="1"/>
</dbReference>
<dbReference type="Gene3D" id="3.40.50.300">
    <property type="entry name" value="P-loop containing nucleotide triphosphate hydrolases"/>
    <property type="match status" value="1"/>
</dbReference>
<dbReference type="InterPro" id="IPR003593">
    <property type="entry name" value="AAA+_ATPase"/>
</dbReference>
<dbReference type="InterPro" id="IPR003439">
    <property type="entry name" value="ABC_transporter-like_ATP-bd"/>
</dbReference>
<dbReference type="InterPro" id="IPR017871">
    <property type="entry name" value="ABC_transporter-like_CS"/>
</dbReference>
<dbReference type="InterPro" id="IPR045865">
    <property type="entry name" value="ACT-like_dom_sf"/>
</dbReference>
<dbReference type="InterPro" id="IPR041701">
    <property type="entry name" value="MetN_ABC"/>
</dbReference>
<dbReference type="InterPro" id="IPR050086">
    <property type="entry name" value="MetN_ABC_transporter-like"/>
</dbReference>
<dbReference type="InterPro" id="IPR018449">
    <property type="entry name" value="NIL_domain"/>
</dbReference>
<dbReference type="InterPro" id="IPR027417">
    <property type="entry name" value="P-loop_NTPase"/>
</dbReference>
<dbReference type="PANTHER" id="PTHR43166">
    <property type="entry name" value="AMINO ACID IMPORT ATP-BINDING PROTEIN"/>
    <property type="match status" value="1"/>
</dbReference>
<dbReference type="PANTHER" id="PTHR43166:SF30">
    <property type="entry name" value="METHIONINE IMPORT ATP-BINDING PROTEIN METN"/>
    <property type="match status" value="1"/>
</dbReference>
<dbReference type="Pfam" id="PF00005">
    <property type="entry name" value="ABC_tran"/>
    <property type="match status" value="1"/>
</dbReference>
<dbReference type="Pfam" id="PF09383">
    <property type="entry name" value="NIL"/>
    <property type="match status" value="1"/>
</dbReference>
<dbReference type="SMART" id="SM00382">
    <property type="entry name" value="AAA"/>
    <property type="match status" value="1"/>
</dbReference>
<dbReference type="SMART" id="SM00930">
    <property type="entry name" value="NIL"/>
    <property type="match status" value="1"/>
</dbReference>
<dbReference type="SUPFAM" id="SSF55021">
    <property type="entry name" value="ACT-like"/>
    <property type="match status" value="1"/>
</dbReference>
<dbReference type="SUPFAM" id="SSF52540">
    <property type="entry name" value="P-loop containing nucleoside triphosphate hydrolases"/>
    <property type="match status" value="1"/>
</dbReference>
<dbReference type="PROSITE" id="PS00211">
    <property type="entry name" value="ABC_TRANSPORTER_1"/>
    <property type="match status" value="1"/>
</dbReference>
<dbReference type="PROSITE" id="PS50893">
    <property type="entry name" value="ABC_TRANSPORTER_2"/>
    <property type="match status" value="1"/>
</dbReference>
<dbReference type="PROSITE" id="PS51264">
    <property type="entry name" value="METN"/>
    <property type="match status" value="1"/>
</dbReference>
<keyword id="KW-0029">Amino-acid transport</keyword>
<keyword id="KW-0067">ATP-binding</keyword>
<keyword id="KW-0997">Cell inner membrane</keyword>
<keyword id="KW-1003">Cell membrane</keyword>
<keyword id="KW-0472">Membrane</keyword>
<keyword id="KW-0547">Nucleotide-binding</keyword>
<keyword id="KW-1278">Translocase</keyword>
<keyword id="KW-0813">Transport</keyword>
<feature type="chain" id="PRO_0000270360" description="Methionine import ATP-binding protein MetN">
    <location>
        <begin position="1"/>
        <end position="344"/>
    </location>
</feature>
<feature type="domain" description="ABC transporter" evidence="1">
    <location>
        <begin position="2"/>
        <end position="241"/>
    </location>
</feature>
<feature type="binding site" evidence="1">
    <location>
        <begin position="38"/>
        <end position="45"/>
    </location>
    <ligand>
        <name>ATP</name>
        <dbReference type="ChEBI" id="CHEBI:30616"/>
    </ligand>
</feature>
<accession>Q46Y69</accession>
<name>METN_CUPPJ</name>